<feature type="chain" id="PRO_0000075898" description="Rho-type GTPase-activating protein 1">
    <location>
        <begin position="1"/>
        <end position="1150"/>
    </location>
</feature>
<feature type="domain" description="LIM zinc-binding 1" evidence="1">
    <location>
        <begin position="114"/>
        <end position="177"/>
    </location>
</feature>
<feature type="domain" description="LIM zinc-binding 2" evidence="1">
    <location>
        <begin position="178"/>
        <end position="238"/>
    </location>
</feature>
<feature type="domain" description="LIM zinc-binding 3" evidence="1">
    <location>
        <begin position="483"/>
        <end position="546"/>
    </location>
</feature>
<feature type="domain" description="Rho-GAP" evidence="2">
    <location>
        <begin position="837"/>
        <end position="1038"/>
    </location>
</feature>
<feature type="region of interest" description="Disordered" evidence="3">
    <location>
        <begin position="1"/>
        <end position="78"/>
    </location>
</feature>
<feature type="region of interest" description="Disordered" evidence="3">
    <location>
        <begin position="586"/>
        <end position="683"/>
    </location>
</feature>
<feature type="region of interest" description="Disordered" evidence="3">
    <location>
        <begin position="726"/>
        <end position="759"/>
    </location>
</feature>
<feature type="region of interest" description="Disordered" evidence="3">
    <location>
        <begin position="1078"/>
        <end position="1097"/>
    </location>
</feature>
<feature type="region of interest" description="Disordered" evidence="3">
    <location>
        <begin position="1104"/>
        <end position="1150"/>
    </location>
</feature>
<feature type="compositionally biased region" description="Basic and acidic residues" evidence="3">
    <location>
        <begin position="1"/>
        <end position="10"/>
    </location>
</feature>
<feature type="compositionally biased region" description="Polar residues" evidence="3">
    <location>
        <begin position="40"/>
        <end position="62"/>
    </location>
</feature>
<feature type="compositionally biased region" description="Polar residues" evidence="3">
    <location>
        <begin position="598"/>
        <end position="617"/>
    </location>
</feature>
<feature type="compositionally biased region" description="Low complexity" evidence="3">
    <location>
        <begin position="642"/>
        <end position="655"/>
    </location>
</feature>
<feature type="compositionally biased region" description="Basic residues" evidence="3">
    <location>
        <begin position="1088"/>
        <end position="1097"/>
    </location>
</feature>
<feature type="compositionally biased region" description="Polar residues" evidence="3">
    <location>
        <begin position="1104"/>
        <end position="1134"/>
    </location>
</feature>
<feature type="site" description="Arginine finger; crucial for GTP hydrolysis by stabilizing the transition state" evidence="2">
    <location>
        <position position="884"/>
    </location>
</feature>
<feature type="modified residue" description="Phosphoserine" evidence="5">
    <location>
        <position position="690"/>
    </location>
</feature>
<name>RGA1_SCHPO</name>
<accession>O43052</accession>
<proteinExistence type="evidence at protein level"/>
<sequence length="1150" mass="130602">MSQRDAKKDGLLYTTNGVSPTPPKRIPVPSRQNKIEENSTTKNFPHSRHTSTVAGTEGGSSLSRRHTSAESRKALPNQQQLAQSGLLNKEEQQSLKRSDTSVFPKAVRKVSSSKICASCGQVISGQYVRALGNIYHLECFRCHDCNSLVASKFFPIDDPTLNKQVPLCETDYFRRLDLLCASCGMALRGYYITALNKKFHIEHFTCSLCYTVFGPNDSYYEYEGKVYCHYHYSTLFAARCCGCDGPILRQFVEVYRNGVSQNWHVPCHMIYKFWNVKLCQKTSIETSKKKDSELSQSQLRKREKHLEQKIFHIWHALSYFEEYTASCISDMLLLVSNGEFTKSVICAQKFIRYIEILFKGIDSLETILSSFHAKSMPYVREAKLLCKKLVSIFALLAKCHNSDIRDVAIVQDFLSLFTGLAHYLKLLIRISLTGGLRLEQDHACKHALPQFLQTVEEARFVDQEGYDSSSFDMPLNLANASSDLCYVCHSALEEDCVLLGEIRCHIGCLSCTKCKYNNRENYDWARWNNQTKQIECYLCYTESSNVSNDEPHPSFEYVSRLSQYIYLLRIALVRLYTILMENNDSSQRKPLSVDPKQENVSSTVETAKQAETTASSDSFRKYANTLNDLRHLKSSRNRKATSNETQSSSNSTETSKLSKNVSESGKDKSPHWHSHGGSITGKSIVEQASSPLERRMDAFDENRAFTLDDIPKVISEQRNREHRPNAFRHMPSYTDPSYRKNSGAIYDKNDGTQKGLTPKSEDAPIRYLSDLSNLELLFTKHVAVLILHPLVRDYYSLDELMEMSDLRKGGFWEKFGKAFKGKDAEKKNVKKKGTFGVPLEILVERNNAQSTVGTGVGVKHIPAFIGNTLAAMKRKDMSVVGVFRKNGNIRRLKELSDMLDVSPDSIDYEQETPIQLAALLKKFLRELPDPLLTFKLFGLFITSSKLESEEERMRVLHLTICLLPKGHRDTMEVIFGFLYWVASFSHIDDEVGSKMDIHNLATVITPNILYSKSNDPVDESFLAIEAVHLLIENFEKFCEVPREISLLLDDPTLFYNNAAWTSKELYKRCEEIISQMSLDERNTPKHTASTKRKRQPIRRVTTNLTSDVPSGSEVADTNSLSSTTKDEASPNSDAQPKPQVKPQHAVIRDS</sequence>
<reference key="1">
    <citation type="journal article" date="2002" name="Nature">
        <title>The genome sequence of Schizosaccharomyces pombe.</title>
        <authorList>
            <person name="Wood V."/>
            <person name="Gwilliam R."/>
            <person name="Rajandream M.A."/>
            <person name="Lyne M.H."/>
            <person name="Lyne R."/>
            <person name="Stewart A."/>
            <person name="Sgouros J.G."/>
            <person name="Peat N."/>
            <person name="Hayles J."/>
            <person name="Baker S.G."/>
            <person name="Basham D."/>
            <person name="Bowman S."/>
            <person name="Brooks K."/>
            <person name="Brown D."/>
            <person name="Brown S."/>
            <person name="Chillingworth T."/>
            <person name="Churcher C.M."/>
            <person name="Collins M."/>
            <person name="Connor R."/>
            <person name="Cronin A."/>
            <person name="Davis P."/>
            <person name="Feltwell T."/>
            <person name="Fraser A."/>
            <person name="Gentles S."/>
            <person name="Goble A."/>
            <person name="Hamlin N."/>
            <person name="Harris D.E."/>
            <person name="Hidalgo J."/>
            <person name="Hodgson G."/>
            <person name="Holroyd S."/>
            <person name="Hornsby T."/>
            <person name="Howarth S."/>
            <person name="Huckle E.J."/>
            <person name="Hunt S."/>
            <person name="Jagels K."/>
            <person name="James K.D."/>
            <person name="Jones L."/>
            <person name="Jones M."/>
            <person name="Leather S."/>
            <person name="McDonald S."/>
            <person name="McLean J."/>
            <person name="Mooney P."/>
            <person name="Moule S."/>
            <person name="Mungall K.L."/>
            <person name="Murphy L.D."/>
            <person name="Niblett D."/>
            <person name="Odell C."/>
            <person name="Oliver K."/>
            <person name="O'Neil S."/>
            <person name="Pearson D."/>
            <person name="Quail M.A."/>
            <person name="Rabbinowitsch E."/>
            <person name="Rutherford K.M."/>
            <person name="Rutter S."/>
            <person name="Saunders D."/>
            <person name="Seeger K."/>
            <person name="Sharp S."/>
            <person name="Skelton J."/>
            <person name="Simmonds M.N."/>
            <person name="Squares R."/>
            <person name="Squares S."/>
            <person name="Stevens K."/>
            <person name="Taylor K."/>
            <person name="Taylor R.G."/>
            <person name="Tivey A."/>
            <person name="Walsh S.V."/>
            <person name="Warren T."/>
            <person name="Whitehead S."/>
            <person name="Woodward J.R."/>
            <person name="Volckaert G."/>
            <person name="Aert R."/>
            <person name="Robben J."/>
            <person name="Grymonprez B."/>
            <person name="Weltjens I."/>
            <person name="Vanstreels E."/>
            <person name="Rieger M."/>
            <person name="Schaefer M."/>
            <person name="Mueller-Auer S."/>
            <person name="Gabel C."/>
            <person name="Fuchs M."/>
            <person name="Duesterhoeft A."/>
            <person name="Fritzc C."/>
            <person name="Holzer E."/>
            <person name="Moestl D."/>
            <person name="Hilbert H."/>
            <person name="Borzym K."/>
            <person name="Langer I."/>
            <person name="Beck A."/>
            <person name="Lehrach H."/>
            <person name="Reinhardt R."/>
            <person name="Pohl T.M."/>
            <person name="Eger P."/>
            <person name="Zimmermann W."/>
            <person name="Wedler H."/>
            <person name="Wambutt R."/>
            <person name="Purnelle B."/>
            <person name="Goffeau A."/>
            <person name="Cadieu E."/>
            <person name="Dreano S."/>
            <person name="Gloux S."/>
            <person name="Lelaure V."/>
            <person name="Mottier S."/>
            <person name="Galibert F."/>
            <person name="Aves S.J."/>
            <person name="Xiang Z."/>
            <person name="Hunt C."/>
            <person name="Moore K."/>
            <person name="Hurst S.M."/>
            <person name="Lucas M."/>
            <person name="Rochet M."/>
            <person name="Gaillardin C."/>
            <person name="Tallada V.A."/>
            <person name="Garzon A."/>
            <person name="Thode G."/>
            <person name="Daga R.R."/>
            <person name="Cruzado L."/>
            <person name="Jimenez J."/>
            <person name="Sanchez M."/>
            <person name="del Rey F."/>
            <person name="Benito J."/>
            <person name="Dominguez A."/>
            <person name="Revuelta J.L."/>
            <person name="Moreno S."/>
            <person name="Armstrong J."/>
            <person name="Forsburg S.L."/>
            <person name="Cerutti L."/>
            <person name="Lowe T."/>
            <person name="McCombie W.R."/>
            <person name="Paulsen I."/>
            <person name="Potashkin J."/>
            <person name="Shpakovski G.V."/>
            <person name="Ussery D."/>
            <person name="Barrell B.G."/>
            <person name="Nurse P."/>
        </authorList>
    </citation>
    <scope>NUCLEOTIDE SEQUENCE [LARGE SCALE GENOMIC DNA]</scope>
    <source>
        <strain>972 / ATCC 24843</strain>
    </source>
</reference>
<reference key="2">
    <citation type="journal article" date="2001" name="Genes Cells">
        <title>Characterization of GTPase-activating proteins for the function of the Rho-family small GTPases in the fission yeast Schizosaccharomyces pombe.</title>
        <authorList>
            <person name="Nakano K."/>
            <person name="Mutoh T."/>
            <person name="Mabuchi I."/>
        </authorList>
    </citation>
    <scope>FUNCTION</scope>
    <scope>SUBCELLULAR LOCATION</scope>
</reference>
<reference key="3">
    <citation type="journal article" date="2008" name="J. Proteome Res.">
        <title>Phosphoproteome analysis of fission yeast.</title>
        <authorList>
            <person name="Wilson-Grady J.T."/>
            <person name="Villen J."/>
            <person name="Gygi S.P."/>
        </authorList>
    </citation>
    <scope>PHOSPHORYLATION [LARGE SCALE ANALYSIS] AT SER-690</scope>
    <scope>IDENTIFICATION BY MASS SPECTROMETRY</scope>
</reference>
<dbReference type="EMBL" id="CU329671">
    <property type="protein sequence ID" value="CAA17694.1"/>
    <property type="molecule type" value="Genomic_DNA"/>
</dbReference>
<dbReference type="PIR" id="T40395">
    <property type="entry name" value="T40395"/>
</dbReference>
<dbReference type="RefSeq" id="NP_596743.1">
    <property type="nucleotide sequence ID" value="NM_001023763.2"/>
</dbReference>
<dbReference type="SMR" id="O43052"/>
<dbReference type="BioGRID" id="277537">
    <property type="interactions" value="7"/>
</dbReference>
<dbReference type="FunCoup" id="O43052">
    <property type="interactions" value="311"/>
</dbReference>
<dbReference type="STRING" id="284812.O43052"/>
<dbReference type="iPTMnet" id="O43052"/>
<dbReference type="PaxDb" id="4896-SPBC3F6.05.1"/>
<dbReference type="EnsemblFungi" id="SPBC3F6.05.1">
    <property type="protein sequence ID" value="SPBC3F6.05.1:pep"/>
    <property type="gene ID" value="SPBC3F6.05"/>
</dbReference>
<dbReference type="GeneID" id="2541022"/>
<dbReference type="KEGG" id="spo:2541022"/>
<dbReference type="PomBase" id="SPBC3F6.05">
    <property type="gene designation" value="rga1"/>
</dbReference>
<dbReference type="VEuPathDB" id="FungiDB:SPBC3F6.05"/>
<dbReference type="eggNOG" id="KOG1703">
    <property type="taxonomic scope" value="Eukaryota"/>
</dbReference>
<dbReference type="eggNOG" id="KOG2710">
    <property type="taxonomic scope" value="Eukaryota"/>
</dbReference>
<dbReference type="HOGENOM" id="CLU_001321_1_0_1"/>
<dbReference type="InParanoid" id="O43052"/>
<dbReference type="OMA" id="WQMQSSV"/>
<dbReference type="PhylomeDB" id="O43052"/>
<dbReference type="PRO" id="PR:O43052"/>
<dbReference type="Proteomes" id="UP000002485">
    <property type="component" value="Chromosome II"/>
</dbReference>
<dbReference type="GO" id="GO:0051285">
    <property type="term" value="C:cell cortex of cell tip"/>
    <property type="evidence" value="ECO:0000314"/>
    <property type="project" value="PomBase"/>
</dbReference>
<dbReference type="GO" id="GO:0032153">
    <property type="term" value="C:cell division site"/>
    <property type="evidence" value="ECO:0007005"/>
    <property type="project" value="PomBase"/>
</dbReference>
<dbReference type="GO" id="GO:0051286">
    <property type="term" value="C:cell tip"/>
    <property type="evidence" value="ECO:0007005"/>
    <property type="project" value="PomBase"/>
</dbReference>
<dbReference type="GO" id="GO:0005737">
    <property type="term" value="C:cytoplasm"/>
    <property type="evidence" value="ECO:0000318"/>
    <property type="project" value="GO_Central"/>
</dbReference>
<dbReference type="GO" id="GO:0005829">
    <property type="term" value="C:cytosol"/>
    <property type="evidence" value="ECO:0007005"/>
    <property type="project" value="PomBase"/>
</dbReference>
<dbReference type="GO" id="GO:0000935">
    <property type="term" value="C:division septum"/>
    <property type="evidence" value="ECO:0000314"/>
    <property type="project" value="PomBase"/>
</dbReference>
<dbReference type="GO" id="GO:0005634">
    <property type="term" value="C:nucleus"/>
    <property type="evidence" value="ECO:0007005"/>
    <property type="project" value="PomBase"/>
</dbReference>
<dbReference type="GO" id="GO:0005096">
    <property type="term" value="F:GTPase activator activity"/>
    <property type="evidence" value="ECO:0000316"/>
    <property type="project" value="PomBase"/>
</dbReference>
<dbReference type="GO" id="GO:0046872">
    <property type="term" value="F:metal ion binding"/>
    <property type="evidence" value="ECO:0007669"/>
    <property type="project" value="UniProtKB-KW"/>
</dbReference>
<dbReference type="GO" id="GO:0030036">
    <property type="term" value="P:actin cytoskeleton organization"/>
    <property type="evidence" value="ECO:0000318"/>
    <property type="project" value="GO_Central"/>
</dbReference>
<dbReference type="GO" id="GO:0032956">
    <property type="term" value="P:regulation of actin cytoskeleton organization"/>
    <property type="evidence" value="ECO:0000315"/>
    <property type="project" value="PomBase"/>
</dbReference>
<dbReference type="GO" id="GO:1903338">
    <property type="term" value="P:regulation of cell wall organization or biogenesis"/>
    <property type="evidence" value="ECO:0000315"/>
    <property type="project" value="PomBase"/>
</dbReference>
<dbReference type="GO" id="GO:0007165">
    <property type="term" value="P:signal transduction"/>
    <property type="evidence" value="ECO:0007669"/>
    <property type="project" value="InterPro"/>
</dbReference>
<dbReference type="CDD" id="cd09391">
    <property type="entry name" value="LIM1_Lrg1p_like"/>
    <property type="match status" value="1"/>
</dbReference>
<dbReference type="CDD" id="cd09392">
    <property type="entry name" value="LIM2_Lrg1p_like"/>
    <property type="match status" value="1"/>
</dbReference>
<dbReference type="CDD" id="cd04397">
    <property type="entry name" value="RhoGAP_fLRG1"/>
    <property type="match status" value="1"/>
</dbReference>
<dbReference type="FunFam" id="2.10.110.10:FF:000112">
    <property type="entry name" value="Rho GTPase activator (Lrg11)"/>
    <property type="match status" value="1"/>
</dbReference>
<dbReference type="FunFam" id="2.10.110.10:FF:000058">
    <property type="entry name" value="Rho GTPase activator Lrg11"/>
    <property type="match status" value="1"/>
</dbReference>
<dbReference type="Gene3D" id="2.10.110.10">
    <property type="entry name" value="Cysteine Rich Protein"/>
    <property type="match status" value="2"/>
</dbReference>
<dbReference type="Gene3D" id="1.10.555.10">
    <property type="entry name" value="Rho GTPase activation protein"/>
    <property type="match status" value="1"/>
</dbReference>
<dbReference type="InterPro" id="IPR008936">
    <property type="entry name" value="Rho_GTPase_activation_prot"/>
</dbReference>
<dbReference type="InterPro" id="IPR000198">
    <property type="entry name" value="RhoGAP_dom"/>
</dbReference>
<dbReference type="InterPro" id="IPR001781">
    <property type="entry name" value="Znf_LIM"/>
</dbReference>
<dbReference type="PANTHER" id="PTHR14963">
    <property type="entry name" value="RHO GTPASE ACTIVATING PROTEIN 18,19-RELATED"/>
    <property type="match status" value="1"/>
</dbReference>
<dbReference type="PANTHER" id="PTHR14963:SF1">
    <property type="entry name" value="RHO GTPASE-ACTIVATING PROTEIN CONUNDRUM"/>
    <property type="match status" value="1"/>
</dbReference>
<dbReference type="Pfam" id="PF00412">
    <property type="entry name" value="LIM"/>
    <property type="match status" value="2"/>
</dbReference>
<dbReference type="Pfam" id="PF00620">
    <property type="entry name" value="RhoGAP"/>
    <property type="match status" value="1"/>
</dbReference>
<dbReference type="SMART" id="SM00132">
    <property type="entry name" value="LIM"/>
    <property type="match status" value="2"/>
</dbReference>
<dbReference type="SMART" id="SM00324">
    <property type="entry name" value="RhoGAP"/>
    <property type="match status" value="1"/>
</dbReference>
<dbReference type="SUPFAM" id="SSF57716">
    <property type="entry name" value="Glucocorticoid receptor-like (DNA-binding domain)"/>
    <property type="match status" value="3"/>
</dbReference>
<dbReference type="SUPFAM" id="SSF48350">
    <property type="entry name" value="GTPase activation domain, GAP"/>
    <property type="match status" value="1"/>
</dbReference>
<dbReference type="PROSITE" id="PS00478">
    <property type="entry name" value="LIM_DOMAIN_1"/>
    <property type="match status" value="2"/>
</dbReference>
<dbReference type="PROSITE" id="PS50023">
    <property type="entry name" value="LIM_DOMAIN_2"/>
    <property type="match status" value="3"/>
</dbReference>
<dbReference type="PROSITE" id="PS50238">
    <property type="entry name" value="RHOGAP"/>
    <property type="match status" value="1"/>
</dbReference>
<organism>
    <name type="scientific">Schizosaccharomyces pombe (strain 972 / ATCC 24843)</name>
    <name type="common">Fission yeast</name>
    <dbReference type="NCBI Taxonomy" id="284812"/>
    <lineage>
        <taxon>Eukaryota</taxon>
        <taxon>Fungi</taxon>
        <taxon>Dikarya</taxon>
        <taxon>Ascomycota</taxon>
        <taxon>Taphrinomycotina</taxon>
        <taxon>Schizosaccharomycetes</taxon>
        <taxon>Schizosaccharomycetales</taxon>
        <taxon>Schizosaccharomycetaceae</taxon>
        <taxon>Schizosaccharomyces</taxon>
    </lineage>
</organism>
<protein>
    <recommendedName>
        <fullName>Rho-type GTPase-activating protein 1</fullName>
    </recommendedName>
</protein>
<keyword id="KW-0343">GTPase activation</keyword>
<keyword id="KW-0440">LIM domain</keyword>
<keyword id="KW-0479">Metal-binding</keyword>
<keyword id="KW-0539">Nucleus</keyword>
<keyword id="KW-0597">Phosphoprotein</keyword>
<keyword id="KW-1185">Reference proteome</keyword>
<keyword id="KW-0677">Repeat</keyword>
<keyword id="KW-0862">Zinc</keyword>
<evidence type="ECO:0000255" key="1">
    <source>
        <dbReference type="PROSITE-ProRule" id="PRU00125"/>
    </source>
</evidence>
<evidence type="ECO:0000255" key="2">
    <source>
        <dbReference type="PROSITE-ProRule" id="PRU00172"/>
    </source>
</evidence>
<evidence type="ECO:0000256" key="3">
    <source>
        <dbReference type="SAM" id="MobiDB-lite"/>
    </source>
</evidence>
<evidence type="ECO:0000269" key="4">
    <source>
    </source>
</evidence>
<evidence type="ECO:0000269" key="5">
    <source>
    </source>
</evidence>
<gene>
    <name type="primary">rga1</name>
    <name type="ORF">SPBC3F6.05</name>
</gene>
<comment type="function">
    <text evidence="4">GTPase-activating protein for Rho1. Involved in the F-actin patch localization, cell morphogenesis, regulation of septation, and cell wall synthesis.</text>
</comment>
<comment type="subcellular location">
    <subcellularLocation>
        <location evidence="4">Cell tip</location>
    </subcellularLocation>
    <subcellularLocation>
        <location evidence="4">Nucleus</location>
    </subcellularLocation>
    <text evidence="4">Cell poles and cell division site.</text>
</comment>